<dbReference type="EMBL" id="CP000924">
    <property type="protein sequence ID" value="ABY94668.1"/>
    <property type="molecule type" value="Genomic_DNA"/>
</dbReference>
<dbReference type="RefSeq" id="WP_003868520.1">
    <property type="nucleotide sequence ID" value="NC_010321.1"/>
</dbReference>
<dbReference type="SMR" id="B0K955"/>
<dbReference type="STRING" id="340099.Teth39_1013"/>
<dbReference type="KEGG" id="tpd:Teth39_1013"/>
<dbReference type="eggNOG" id="COG0632">
    <property type="taxonomic scope" value="Bacteria"/>
</dbReference>
<dbReference type="HOGENOM" id="CLU_087936_3_0_9"/>
<dbReference type="Proteomes" id="UP000002156">
    <property type="component" value="Chromosome"/>
</dbReference>
<dbReference type="GO" id="GO:0005737">
    <property type="term" value="C:cytoplasm"/>
    <property type="evidence" value="ECO:0007669"/>
    <property type="project" value="UniProtKB-SubCell"/>
</dbReference>
<dbReference type="GO" id="GO:0009379">
    <property type="term" value="C:Holliday junction helicase complex"/>
    <property type="evidence" value="ECO:0007669"/>
    <property type="project" value="InterPro"/>
</dbReference>
<dbReference type="GO" id="GO:0048476">
    <property type="term" value="C:Holliday junction resolvase complex"/>
    <property type="evidence" value="ECO:0007669"/>
    <property type="project" value="UniProtKB-UniRule"/>
</dbReference>
<dbReference type="GO" id="GO:0005524">
    <property type="term" value="F:ATP binding"/>
    <property type="evidence" value="ECO:0007669"/>
    <property type="project" value="InterPro"/>
</dbReference>
<dbReference type="GO" id="GO:0000400">
    <property type="term" value="F:four-way junction DNA binding"/>
    <property type="evidence" value="ECO:0007669"/>
    <property type="project" value="UniProtKB-UniRule"/>
</dbReference>
<dbReference type="GO" id="GO:0009378">
    <property type="term" value="F:four-way junction helicase activity"/>
    <property type="evidence" value="ECO:0007669"/>
    <property type="project" value="InterPro"/>
</dbReference>
<dbReference type="GO" id="GO:0006310">
    <property type="term" value="P:DNA recombination"/>
    <property type="evidence" value="ECO:0007669"/>
    <property type="project" value="UniProtKB-UniRule"/>
</dbReference>
<dbReference type="GO" id="GO:0006281">
    <property type="term" value="P:DNA repair"/>
    <property type="evidence" value="ECO:0007669"/>
    <property type="project" value="UniProtKB-UniRule"/>
</dbReference>
<dbReference type="CDD" id="cd14332">
    <property type="entry name" value="UBA_RuvA_C"/>
    <property type="match status" value="1"/>
</dbReference>
<dbReference type="Gene3D" id="1.10.150.20">
    <property type="entry name" value="5' to 3' exonuclease, C-terminal subdomain"/>
    <property type="match status" value="1"/>
</dbReference>
<dbReference type="Gene3D" id="1.10.8.10">
    <property type="entry name" value="DNA helicase RuvA subunit, C-terminal domain"/>
    <property type="match status" value="1"/>
</dbReference>
<dbReference type="Gene3D" id="2.40.50.140">
    <property type="entry name" value="Nucleic acid-binding proteins"/>
    <property type="match status" value="1"/>
</dbReference>
<dbReference type="HAMAP" id="MF_00031">
    <property type="entry name" value="DNA_HJ_migration_RuvA"/>
    <property type="match status" value="1"/>
</dbReference>
<dbReference type="InterPro" id="IPR013849">
    <property type="entry name" value="DNA_helicase_Holl-junc_RuvA_I"/>
</dbReference>
<dbReference type="InterPro" id="IPR003583">
    <property type="entry name" value="Hlx-hairpin-Hlx_DNA-bd_motif"/>
</dbReference>
<dbReference type="InterPro" id="IPR012340">
    <property type="entry name" value="NA-bd_OB-fold"/>
</dbReference>
<dbReference type="InterPro" id="IPR000085">
    <property type="entry name" value="RuvA"/>
</dbReference>
<dbReference type="InterPro" id="IPR010994">
    <property type="entry name" value="RuvA_2-like"/>
</dbReference>
<dbReference type="InterPro" id="IPR011114">
    <property type="entry name" value="RuvA_C"/>
</dbReference>
<dbReference type="InterPro" id="IPR036267">
    <property type="entry name" value="RuvA_C_sf"/>
</dbReference>
<dbReference type="NCBIfam" id="TIGR00084">
    <property type="entry name" value="ruvA"/>
    <property type="match status" value="1"/>
</dbReference>
<dbReference type="Pfam" id="PF14520">
    <property type="entry name" value="HHH_5"/>
    <property type="match status" value="1"/>
</dbReference>
<dbReference type="Pfam" id="PF07499">
    <property type="entry name" value="RuvA_C"/>
    <property type="match status" value="1"/>
</dbReference>
<dbReference type="Pfam" id="PF01330">
    <property type="entry name" value="RuvA_N"/>
    <property type="match status" value="1"/>
</dbReference>
<dbReference type="SMART" id="SM00278">
    <property type="entry name" value="HhH1"/>
    <property type="match status" value="2"/>
</dbReference>
<dbReference type="SUPFAM" id="SSF46929">
    <property type="entry name" value="DNA helicase RuvA subunit, C-terminal domain"/>
    <property type="match status" value="1"/>
</dbReference>
<dbReference type="SUPFAM" id="SSF50249">
    <property type="entry name" value="Nucleic acid-binding proteins"/>
    <property type="match status" value="1"/>
</dbReference>
<dbReference type="SUPFAM" id="SSF47781">
    <property type="entry name" value="RuvA domain 2-like"/>
    <property type="match status" value="1"/>
</dbReference>
<gene>
    <name evidence="1" type="primary">ruvA</name>
    <name type="ordered locus">Teth39_1013</name>
</gene>
<feature type="chain" id="PRO_1000090380" description="Holliday junction branch migration complex subunit RuvA">
    <location>
        <begin position="1"/>
        <end position="187"/>
    </location>
</feature>
<feature type="region of interest" description="Domain I" evidence="1">
    <location>
        <begin position="1"/>
        <end position="64"/>
    </location>
</feature>
<feature type="region of interest" description="Domain II" evidence="1">
    <location>
        <begin position="65"/>
        <end position="136"/>
    </location>
</feature>
<feature type="region of interest" description="Flexible linker" evidence="1">
    <location>
        <begin position="136"/>
        <end position="139"/>
    </location>
</feature>
<feature type="region of interest" description="Domain III" evidence="1">
    <location>
        <begin position="140"/>
        <end position="187"/>
    </location>
</feature>
<comment type="function">
    <text evidence="1">The RuvA-RuvB-RuvC complex processes Holliday junction (HJ) DNA during genetic recombination and DNA repair, while the RuvA-RuvB complex plays an important role in the rescue of blocked DNA replication forks via replication fork reversal (RFR). RuvA specifically binds to HJ cruciform DNA, conferring on it an open structure. The RuvB hexamer acts as an ATP-dependent pump, pulling dsDNA into and through the RuvAB complex. HJ branch migration allows RuvC to scan DNA until it finds its consensus sequence, where it cleaves and resolves the cruciform DNA.</text>
</comment>
<comment type="subunit">
    <text evidence="1">Homotetramer. Forms an RuvA(8)-RuvB(12)-Holliday junction (HJ) complex. HJ DNA is sandwiched between 2 RuvA tetramers; dsDNA enters through RuvA and exits via RuvB. An RuvB hexamer assembles on each DNA strand where it exits the tetramer. Each RuvB hexamer is contacted by two RuvA subunits (via domain III) on 2 adjacent RuvB subunits; this complex drives branch migration. In the full resolvosome a probable DNA-RuvA(4)-RuvB(12)-RuvC(2) complex forms which resolves the HJ.</text>
</comment>
<comment type="subcellular location">
    <subcellularLocation>
        <location evidence="1">Cytoplasm</location>
    </subcellularLocation>
</comment>
<comment type="domain">
    <text evidence="1">Has three domains with a flexible linker between the domains II and III and assumes an 'L' shape. Domain III is highly mobile and contacts RuvB.</text>
</comment>
<comment type="similarity">
    <text evidence="1">Belongs to the RuvA family.</text>
</comment>
<sequence>MIEYVRGIIEDIGQDYVVIDFMGIGIKVFVPFSTLKVLPSKGNITKLYTYLQVREDGFQIFGFKTKEELDLFEKLLSVSGVGPKGALSILSVVSIDNFVKAVNAGDYKALTVAPGIGKKTAERIILELKDKLPKEIVFEGDNNFSNEALEALLALGYTKSEAIYALADITCDSVEDAVKQALKKLMK</sequence>
<keyword id="KW-0963">Cytoplasm</keyword>
<keyword id="KW-0227">DNA damage</keyword>
<keyword id="KW-0233">DNA recombination</keyword>
<keyword id="KW-0234">DNA repair</keyword>
<keyword id="KW-0238">DNA-binding</keyword>
<keyword id="KW-1185">Reference proteome</keyword>
<accession>B0K955</accession>
<proteinExistence type="inferred from homology"/>
<reference key="1">
    <citation type="submission" date="2008-01" db="EMBL/GenBank/DDBJ databases">
        <title>Complete sequence of Thermoanaerobacter pseudethanolicus 39E.</title>
        <authorList>
            <person name="Copeland A."/>
            <person name="Lucas S."/>
            <person name="Lapidus A."/>
            <person name="Barry K."/>
            <person name="Glavina del Rio T."/>
            <person name="Dalin E."/>
            <person name="Tice H."/>
            <person name="Pitluck S."/>
            <person name="Bruce D."/>
            <person name="Goodwin L."/>
            <person name="Saunders E."/>
            <person name="Brettin T."/>
            <person name="Detter J.C."/>
            <person name="Han C."/>
            <person name="Schmutz J."/>
            <person name="Larimer F."/>
            <person name="Land M."/>
            <person name="Hauser L."/>
            <person name="Kyrpides N."/>
            <person name="Lykidis A."/>
            <person name="Hemme C."/>
            <person name="Fields M.W."/>
            <person name="He Z."/>
            <person name="Zhou J."/>
            <person name="Richardson P."/>
        </authorList>
    </citation>
    <scope>NUCLEOTIDE SEQUENCE [LARGE SCALE GENOMIC DNA]</scope>
    <source>
        <strain>ATCC 33223 / DSM 2355 / 39E</strain>
    </source>
</reference>
<name>RUVA_THEP3</name>
<evidence type="ECO:0000255" key="1">
    <source>
        <dbReference type="HAMAP-Rule" id="MF_00031"/>
    </source>
</evidence>
<organism>
    <name type="scientific">Thermoanaerobacter pseudethanolicus (strain ATCC 33223 / 39E)</name>
    <name type="common">Clostridium thermohydrosulfuricum</name>
    <dbReference type="NCBI Taxonomy" id="340099"/>
    <lineage>
        <taxon>Bacteria</taxon>
        <taxon>Bacillati</taxon>
        <taxon>Bacillota</taxon>
        <taxon>Clostridia</taxon>
        <taxon>Thermoanaerobacterales</taxon>
        <taxon>Thermoanaerobacteraceae</taxon>
        <taxon>Thermoanaerobacter</taxon>
    </lineage>
</organism>
<protein>
    <recommendedName>
        <fullName evidence="1">Holliday junction branch migration complex subunit RuvA</fullName>
    </recommendedName>
</protein>